<organism>
    <name type="scientific">Borreliella burgdorferi (strain ZS7)</name>
    <name type="common">Borrelia burgdorferi</name>
    <dbReference type="NCBI Taxonomy" id="445985"/>
    <lineage>
        <taxon>Bacteria</taxon>
        <taxon>Pseudomonadati</taxon>
        <taxon>Spirochaetota</taxon>
        <taxon>Spirochaetia</taxon>
        <taxon>Spirochaetales</taxon>
        <taxon>Borreliaceae</taxon>
        <taxon>Borreliella</taxon>
    </lineage>
</organism>
<reference key="1">
    <citation type="journal article" date="2011" name="J. Bacteriol.">
        <title>Whole-genome sequences of thirteen isolates of Borrelia burgdorferi.</title>
        <authorList>
            <person name="Schutzer S.E."/>
            <person name="Fraser-Liggett C.M."/>
            <person name="Casjens S.R."/>
            <person name="Qiu W.G."/>
            <person name="Dunn J.J."/>
            <person name="Mongodin E.F."/>
            <person name="Luft B.J."/>
        </authorList>
    </citation>
    <scope>NUCLEOTIDE SEQUENCE [LARGE SCALE GENOMIC DNA]</scope>
    <source>
        <strain>ZS7</strain>
    </source>
</reference>
<accession>B7J0T5</accession>
<gene>
    <name evidence="1" type="primary">arcA</name>
    <name type="ordered locus">BbuZS7_0871</name>
</gene>
<comment type="catalytic activity">
    <reaction evidence="1">
        <text>L-arginine + H2O = L-citrulline + NH4(+)</text>
        <dbReference type="Rhea" id="RHEA:19597"/>
        <dbReference type="ChEBI" id="CHEBI:15377"/>
        <dbReference type="ChEBI" id="CHEBI:28938"/>
        <dbReference type="ChEBI" id="CHEBI:32682"/>
        <dbReference type="ChEBI" id="CHEBI:57743"/>
        <dbReference type="EC" id="3.5.3.6"/>
    </reaction>
</comment>
<comment type="pathway">
    <text evidence="1">Amino-acid degradation; L-arginine degradation via ADI pathway; carbamoyl phosphate from L-arginine: step 1/2.</text>
</comment>
<comment type="subcellular location">
    <subcellularLocation>
        <location evidence="1">Cytoplasm</location>
    </subcellularLocation>
</comment>
<comment type="similarity">
    <text evidence="1">Belongs to the arginine deiminase family.</text>
</comment>
<proteinExistence type="inferred from homology"/>
<sequence length="410" mass="46844">MEEEYLNPINIFSEIGRLKKVLLHRPGEELENLTPLIMKNFLFDDIPYLKVARQEHEVFVNILKDNSVEIEYVEDLVSEVLASSVALKNKFISQFILEAEIKTDGVINILKDYFSNLTVDNMVSKMISGVAREELKDCEFSLDDWVNGSSLFVIDPMPNVLFTRDPFASIGNGITINKMYTKVRRRETIFAEYIFKYHSAYKENVPIWFNRWEETSLEGGDEFVLNKDLLVIGISERTEAGSVEKLAASLFKNKAPFSTILAFKIPKNRAYMHLDTVFTQIDYSVFTSFTSDDMYFSIYVLTYNSNSNKINIKKEKAKLKDVLSFYLGRKIDIIKCAGGDLIHGAREQWNDGANVLAIAPGEVIAYSRNHVTNKLFEENGIKVHRIPSSELSRGRGGPRCMSMSLVREDI</sequence>
<protein>
    <recommendedName>
        <fullName evidence="1">Arginine deiminase</fullName>
        <shortName evidence="1">ADI</shortName>
        <ecNumber evidence="1">3.5.3.6</ecNumber>
    </recommendedName>
    <alternativeName>
        <fullName evidence="1">Arginine dihydrolase</fullName>
        <shortName evidence="1">AD</shortName>
    </alternativeName>
</protein>
<keyword id="KW-0056">Arginine metabolism</keyword>
<keyword id="KW-0963">Cytoplasm</keyword>
<keyword id="KW-0378">Hydrolase</keyword>
<name>ARCA_BORBZ</name>
<evidence type="ECO:0000255" key="1">
    <source>
        <dbReference type="HAMAP-Rule" id="MF_00242"/>
    </source>
</evidence>
<feature type="chain" id="PRO_1000119036" description="Arginine deiminase">
    <location>
        <begin position="1"/>
        <end position="410"/>
    </location>
</feature>
<feature type="active site" description="Amidino-cysteine intermediate" evidence="1">
    <location>
        <position position="400"/>
    </location>
</feature>
<dbReference type="EC" id="3.5.3.6" evidence="1"/>
<dbReference type="EMBL" id="CP001205">
    <property type="protein sequence ID" value="ACK74935.1"/>
    <property type="molecule type" value="Genomic_DNA"/>
</dbReference>
<dbReference type="RefSeq" id="WP_002557431.1">
    <property type="nucleotide sequence ID" value="NC_011728.1"/>
</dbReference>
<dbReference type="SMR" id="B7J0T5"/>
<dbReference type="GeneID" id="56567419"/>
<dbReference type="KEGG" id="bbz:BbuZS7_0871"/>
<dbReference type="HOGENOM" id="CLU_052662_0_1_12"/>
<dbReference type="UniPathway" id="UPA00254">
    <property type="reaction ID" value="UER00364"/>
</dbReference>
<dbReference type="Proteomes" id="UP000006901">
    <property type="component" value="Chromosome"/>
</dbReference>
<dbReference type="GO" id="GO:0005737">
    <property type="term" value="C:cytoplasm"/>
    <property type="evidence" value="ECO:0007669"/>
    <property type="project" value="UniProtKB-SubCell"/>
</dbReference>
<dbReference type="GO" id="GO:0016990">
    <property type="term" value="F:arginine deiminase activity"/>
    <property type="evidence" value="ECO:0007669"/>
    <property type="project" value="UniProtKB-UniRule"/>
</dbReference>
<dbReference type="GO" id="GO:0019547">
    <property type="term" value="P:arginine catabolic process to ornithine"/>
    <property type="evidence" value="ECO:0007669"/>
    <property type="project" value="UniProtKB-UniRule"/>
</dbReference>
<dbReference type="GO" id="GO:0019546">
    <property type="term" value="P:arginine deiminase pathway"/>
    <property type="evidence" value="ECO:0007669"/>
    <property type="project" value="TreeGrafter"/>
</dbReference>
<dbReference type="Gene3D" id="1.10.3930.10">
    <property type="entry name" value="Arginine deiminase"/>
    <property type="match status" value="1"/>
</dbReference>
<dbReference type="Gene3D" id="3.75.10.10">
    <property type="entry name" value="L-arginine/glycine Amidinotransferase, Chain A"/>
    <property type="match status" value="1"/>
</dbReference>
<dbReference type="HAMAP" id="MF_00242">
    <property type="entry name" value="Arg_deiminase"/>
    <property type="match status" value="1"/>
</dbReference>
<dbReference type="InterPro" id="IPR003876">
    <property type="entry name" value="Arg_deiminase"/>
</dbReference>
<dbReference type="NCBIfam" id="TIGR01078">
    <property type="entry name" value="arcA"/>
    <property type="match status" value="1"/>
</dbReference>
<dbReference type="NCBIfam" id="NF002381">
    <property type="entry name" value="PRK01388.1"/>
    <property type="match status" value="1"/>
</dbReference>
<dbReference type="PANTHER" id="PTHR47271">
    <property type="entry name" value="ARGININE DEIMINASE"/>
    <property type="match status" value="1"/>
</dbReference>
<dbReference type="PANTHER" id="PTHR47271:SF2">
    <property type="entry name" value="ARGININE DEIMINASE"/>
    <property type="match status" value="1"/>
</dbReference>
<dbReference type="Pfam" id="PF02274">
    <property type="entry name" value="ADI"/>
    <property type="match status" value="1"/>
</dbReference>
<dbReference type="PIRSF" id="PIRSF006356">
    <property type="entry name" value="Arg_deiminase"/>
    <property type="match status" value="1"/>
</dbReference>
<dbReference type="PRINTS" id="PR01466">
    <property type="entry name" value="ARGDEIMINASE"/>
</dbReference>
<dbReference type="SUPFAM" id="SSF55909">
    <property type="entry name" value="Pentein"/>
    <property type="match status" value="1"/>
</dbReference>